<keyword id="KW-0025">Alternative splicing</keyword>
<keyword id="KW-0963">Cytoplasm</keyword>
<keyword id="KW-1015">Disulfide bond</keyword>
<keyword id="KW-0325">Glycoprotein</keyword>
<keyword id="KW-0472">Membrane</keyword>
<keyword id="KW-1185">Reference proteome</keyword>
<keyword id="KW-0677">Repeat</keyword>
<keyword id="KW-0964">Secreted</keyword>
<keyword id="KW-0732">Signal</keyword>
<keyword id="KW-0768">Sushi</keyword>
<reference key="1">
    <citation type="journal article" date="2006" name="Nature">
        <title>The DNA sequence and biological annotation of human chromosome 1.</title>
        <authorList>
            <person name="Gregory S.G."/>
            <person name="Barlow K.F."/>
            <person name="McLay K.E."/>
            <person name="Kaul R."/>
            <person name="Swarbreck D."/>
            <person name="Dunham A."/>
            <person name="Scott C.E."/>
            <person name="Howe K.L."/>
            <person name="Woodfine K."/>
            <person name="Spencer C.C.A."/>
            <person name="Jones M.C."/>
            <person name="Gillson C."/>
            <person name="Searle S."/>
            <person name="Zhou Y."/>
            <person name="Kokocinski F."/>
            <person name="McDonald L."/>
            <person name="Evans R."/>
            <person name="Phillips K."/>
            <person name="Atkinson A."/>
            <person name="Cooper R."/>
            <person name="Jones C."/>
            <person name="Hall R.E."/>
            <person name="Andrews T.D."/>
            <person name="Lloyd C."/>
            <person name="Ainscough R."/>
            <person name="Almeida J.P."/>
            <person name="Ambrose K.D."/>
            <person name="Anderson F."/>
            <person name="Andrew R.W."/>
            <person name="Ashwell R.I.S."/>
            <person name="Aubin K."/>
            <person name="Babbage A.K."/>
            <person name="Bagguley C.L."/>
            <person name="Bailey J."/>
            <person name="Beasley H."/>
            <person name="Bethel G."/>
            <person name="Bird C.P."/>
            <person name="Bray-Allen S."/>
            <person name="Brown J.Y."/>
            <person name="Brown A.J."/>
            <person name="Buckley D."/>
            <person name="Burton J."/>
            <person name="Bye J."/>
            <person name="Carder C."/>
            <person name="Chapman J.C."/>
            <person name="Clark S.Y."/>
            <person name="Clarke G."/>
            <person name="Clee C."/>
            <person name="Cobley V."/>
            <person name="Collier R.E."/>
            <person name="Corby N."/>
            <person name="Coville G.J."/>
            <person name="Davies J."/>
            <person name="Deadman R."/>
            <person name="Dunn M."/>
            <person name="Earthrowl M."/>
            <person name="Ellington A.G."/>
            <person name="Errington H."/>
            <person name="Frankish A."/>
            <person name="Frankland J."/>
            <person name="French L."/>
            <person name="Garner P."/>
            <person name="Garnett J."/>
            <person name="Gay L."/>
            <person name="Ghori M.R.J."/>
            <person name="Gibson R."/>
            <person name="Gilby L.M."/>
            <person name="Gillett W."/>
            <person name="Glithero R.J."/>
            <person name="Grafham D.V."/>
            <person name="Griffiths C."/>
            <person name="Griffiths-Jones S."/>
            <person name="Grocock R."/>
            <person name="Hammond S."/>
            <person name="Harrison E.S.I."/>
            <person name="Hart E."/>
            <person name="Haugen E."/>
            <person name="Heath P.D."/>
            <person name="Holmes S."/>
            <person name="Holt K."/>
            <person name="Howden P.J."/>
            <person name="Hunt A.R."/>
            <person name="Hunt S.E."/>
            <person name="Hunter G."/>
            <person name="Isherwood J."/>
            <person name="James R."/>
            <person name="Johnson C."/>
            <person name="Johnson D."/>
            <person name="Joy A."/>
            <person name="Kay M."/>
            <person name="Kershaw J.K."/>
            <person name="Kibukawa M."/>
            <person name="Kimberley A.M."/>
            <person name="King A."/>
            <person name="Knights A.J."/>
            <person name="Lad H."/>
            <person name="Laird G."/>
            <person name="Lawlor S."/>
            <person name="Leongamornlert D.A."/>
            <person name="Lloyd D.M."/>
            <person name="Loveland J."/>
            <person name="Lovell J."/>
            <person name="Lush M.J."/>
            <person name="Lyne R."/>
            <person name="Martin S."/>
            <person name="Mashreghi-Mohammadi M."/>
            <person name="Matthews L."/>
            <person name="Matthews N.S.W."/>
            <person name="McLaren S."/>
            <person name="Milne S."/>
            <person name="Mistry S."/>
            <person name="Moore M.J.F."/>
            <person name="Nickerson T."/>
            <person name="O'Dell C.N."/>
            <person name="Oliver K."/>
            <person name="Palmeiri A."/>
            <person name="Palmer S.A."/>
            <person name="Parker A."/>
            <person name="Patel D."/>
            <person name="Pearce A.V."/>
            <person name="Peck A.I."/>
            <person name="Pelan S."/>
            <person name="Phelps K."/>
            <person name="Phillimore B.J."/>
            <person name="Plumb R."/>
            <person name="Rajan J."/>
            <person name="Raymond C."/>
            <person name="Rouse G."/>
            <person name="Saenphimmachak C."/>
            <person name="Sehra H.K."/>
            <person name="Sheridan E."/>
            <person name="Shownkeen R."/>
            <person name="Sims S."/>
            <person name="Skuce C.D."/>
            <person name="Smith M."/>
            <person name="Steward C."/>
            <person name="Subramanian S."/>
            <person name="Sycamore N."/>
            <person name="Tracey A."/>
            <person name="Tromans A."/>
            <person name="Van Helmond Z."/>
            <person name="Wall M."/>
            <person name="Wallis J.M."/>
            <person name="White S."/>
            <person name="Whitehead S.L."/>
            <person name="Wilkinson J.E."/>
            <person name="Willey D.L."/>
            <person name="Williams H."/>
            <person name="Wilming L."/>
            <person name="Wray P.W."/>
            <person name="Wu Z."/>
            <person name="Coulson A."/>
            <person name="Vaudin M."/>
            <person name="Sulston J.E."/>
            <person name="Durbin R.M."/>
            <person name="Hubbard T."/>
            <person name="Wooster R."/>
            <person name="Dunham I."/>
            <person name="Carter N.P."/>
            <person name="McVean G."/>
            <person name="Ross M.T."/>
            <person name="Harrow J."/>
            <person name="Olson M.V."/>
            <person name="Beck S."/>
            <person name="Rogers J."/>
            <person name="Bentley D.R."/>
        </authorList>
    </citation>
    <scope>NUCLEOTIDE SEQUENCE [LARGE SCALE GENOMIC DNA] (ISOFORM 1)</scope>
</reference>
<reference key="2">
    <citation type="journal article" date="2004" name="Genome Res.">
        <title>The status, quality, and expansion of the NIH full-length cDNA project: the Mammalian Gene Collection (MGC).</title>
        <authorList>
            <consortium name="The MGC Project Team"/>
        </authorList>
    </citation>
    <scope>NUCLEOTIDE SEQUENCE [LARGE SCALE MRNA] (ISOFORM 2)</scope>
    <scope>NUCLEOTIDE SEQUENCE [LARGE SCALE MRNA] OF 1-526 (ISOFORM 1)</scope>
    <scope>VARIANTS ASP-402 AND VAL-455</scope>
</reference>
<reference key="3">
    <citation type="journal article" date="2004" name="Mol. Immunol.">
        <title>A human CR1-like transcript containing sequence for a binding protein for iC4 is expressed in hematopoietic and fetal lymphoid tissue.</title>
        <authorList>
            <person name="Logar C.M."/>
            <person name="Chen W."/>
            <person name="Schmitt H."/>
            <person name="Yu C.Y."/>
            <person name="Birmingham D.J."/>
        </authorList>
    </citation>
    <scope>NUCLEOTIDE SEQUENCE [MRNA] OF 57-569 (ISOFORM 3)</scope>
    <scope>TISSUE SPECIFICITY</scope>
    <scope>INTERACTION WITH IC4</scope>
    <scope>SUBCELLULAR LOCATION</scope>
    <source>
        <tissue>Bone marrow</tissue>
    </source>
</reference>
<protein>
    <recommendedName>
        <fullName>Complement component receptor 1-like protein</fullName>
    </recommendedName>
    <alternativeName>
        <fullName>Complement C4b-binding protein CR-1-like protein</fullName>
    </alternativeName>
</protein>
<sequence>MAPPVRLERPFPSRRFPGLLLAALVLLLSSFSDQCNVPEWLPFARPTNLTDDFEFPIGTYLNYECRPGYSGRPFSIICLKNSVWTSAKDKCKRKSCRNPPDPVNGMAHVIKDIQFRSQIKYSCPKGYRLIGSSSATCIISGNTVIWDNKTPVCDRIICGLPPTIANGDFTSISREYFHYGSVVTYHCNLGSRGKKVFELVGEPSIYCTSKDDQVGIWSGPAPQCIIPNKCTPPNVENGILVSDNRSLFSLNEVVEFRCQPGFGMKGPSHVKCQALNKWEPELPSCSRVCQPPPDVLHAERTQRDKDNFSPGQEVFYSCEPGYDLRGSTYLHCTPQGDWSPAAPRCEVKSCDDFLGQLPNGHVLFPLNLQLGAKVDFVCDEGFQLKGSSASYCVLAGMESLWNSSVPVCERKSCETPPVPVNGMVHVITDIHVGSRINYSCTTGHRLIGHSSAECILSGNTAHWSMKPPICQQIFCPNPPAILNGRHTGTPLGDIPYGKEVSYTCDPHPDRGMTFNLIGESTIRRTSEPHGNGVWSSPAPRCELPVGAGSHDALIVGKFYEVFAEEFCHL</sequence>
<proteinExistence type="evidence at protein level"/>
<comment type="subunit">
    <text evidence="3">Interacts with iC4 (methylamine-treated C4) but not for iC3 (methylamine-treated C3).</text>
</comment>
<comment type="interaction">
    <interactant intactId="EBI-12330477">
        <id>Q2VPA4</id>
    </interactant>
    <interactant intactId="EBI-11062258">
        <id>Q8NEL9-2</id>
        <label>DDHD1</label>
    </interactant>
    <organismsDiffer>false</organismsDiffer>
    <experiments>3</experiments>
</comment>
<comment type="subcellular location">
    <subcellularLocation>
        <location evidence="3">Cytoplasm</location>
    </subcellularLocation>
    <subcellularLocation>
        <location evidence="3">Membrane</location>
    </subcellularLocation>
    <subcellularLocation>
        <location evidence="3">Secreted</location>
    </subcellularLocation>
    <text>Predominantly found in association with the membrane fraction, but also located in the cytoplasm and in the supernatant.</text>
</comment>
<comment type="alternative products">
    <event type="alternative splicing"/>
    <isoform>
        <id>Q2VPA4-1</id>
        <name>1</name>
        <sequence type="displayed"/>
    </isoform>
    <isoform>
        <id>Q2VPA4-2</id>
        <name>2</name>
        <sequence type="described" ref="VSP_031151 VSP_031152 VSP_031153"/>
    </isoform>
    <isoform>
        <id>Q2VPA4-3</id>
        <name>3</name>
        <sequence type="described" ref="VSP_031152 VSP_031153"/>
    </isoform>
</comment>
<comment type="tissue specificity">
    <text evidence="3">Expressed in fetal liver and to a lesser extent in fetal spleen and thymus. Expression appears to be limited to hematopoietic and fetal lymphoid tissue.</text>
</comment>
<comment type="similarity">
    <text evidence="7">Belongs to the receptors of complement activation (RCA) family.</text>
</comment>
<dbReference type="EMBL" id="AL137789">
    <property type="status" value="NOT_ANNOTATED_CDS"/>
    <property type="molecule type" value="Genomic_DNA"/>
</dbReference>
<dbReference type="EMBL" id="AL365178">
    <property type="status" value="NOT_ANNOTATED_CDS"/>
    <property type="molecule type" value="Genomic_DNA"/>
</dbReference>
<dbReference type="EMBL" id="BC109190">
    <property type="protein sequence ID" value="AAI09191.1"/>
    <property type="molecule type" value="mRNA"/>
</dbReference>
<dbReference type="EMBL" id="BC109191">
    <property type="protein sequence ID" value="AAI09192.1"/>
    <property type="molecule type" value="mRNA"/>
</dbReference>
<dbReference type="EMBL" id="AY114160">
    <property type="protein sequence ID" value="AAM47024.1"/>
    <property type="molecule type" value="mRNA"/>
</dbReference>
<dbReference type="CCDS" id="CCDS44310.1">
    <molecule id="Q2VPA4-1"/>
</dbReference>
<dbReference type="RefSeq" id="NP_783641.1">
    <molecule id="Q2VPA4-1"/>
    <property type="nucleotide sequence ID" value="NM_175710.2"/>
</dbReference>
<dbReference type="SMR" id="Q2VPA4"/>
<dbReference type="BioGRID" id="107770">
    <property type="interactions" value="12"/>
</dbReference>
<dbReference type="FunCoup" id="Q2VPA4">
    <property type="interactions" value="187"/>
</dbReference>
<dbReference type="IntAct" id="Q2VPA4">
    <property type="interactions" value="7"/>
</dbReference>
<dbReference type="STRING" id="9606.ENSP00000421736"/>
<dbReference type="GlyCosmos" id="Q2VPA4">
    <property type="glycosylation" value="1 site, No reported glycans"/>
</dbReference>
<dbReference type="GlyGen" id="Q2VPA4">
    <property type="glycosylation" value="1 site"/>
</dbReference>
<dbReference type="iPTMnet" id="Q2VPA4"/>
<dbReference type="PhosphoSitePlus" id="Q2VPA4"/>
<dbReference type="BioMuta" id="CR1L"/>
<dbReference type="DMDM" id="296439386"/>
<dbReference type="MassIVE" id="Q2VPA4"/>
<dbReference type="PaxDb" id="9606-ENSP00000421736"/>
<dbReference type="PeptideAtlas" id="Q2VPA4"/>
<dbReference type="Antibodypedia" id="53872">
    <property type="antibodies" value="34 antibodies from 10 providers"/>
</dbReference>
<dbReference type="DNASU" id="1379"/>
<dbReference type="Ensembl" id="ENST00000508064.7">
    <molecule id="Q2VPA4-1"/>
    <property type="protein sequence ID" value="ENSP00000421736.2"/>
    <property type="gene ID" value="ENSG00000197721.17"/>
</dbReference>
<dbReference type="GeneID" id="1379"/>
<dbReference type="KEGG" id="hsa:1379"/>
<dbReference type="MANE-Select" id="ENST00000508064.7">
    <property type="protein sequence ID" value="ENSP00000421736.2"/>
    <property type="RefSeq nucleotide sequence ID" value="NM_175710.2"/>
    <property type="RefSeq protein sequence ID" value="NP_783641.1"/>
</dbReference>
<dbReference type="UCSC" id="uc001hga.5">
    <molecule id="Q2VPA4-1"/>
    <property type="organism name" value="human"/>
</dbReference>
<dbReference type="AGR" id="HGNC:2335"/>
<dbReference type="CTD" id="1379"/>
<dbReference type="DisGeNET" id="1379"/>
<dbReference type="GeneCards" id="CR1L"/>
<dbReference type="HGNC" id="HGNC:2335">
    <property type="gene designation" value="CR1L"/>
</dbReference>
<dbReference type="HPA" id="ENSG00000197721">
    <property type="expression patterns" value="Tissue enriched (bone)"/>
</dbReference>
<dbReference type="MIM" id="605886">
    <property type="type" value="gene"/>
</dbReference>
<dbReference type="neXtProt" id="NX_Q2VPA4"/>
<dbReference type="OpenTargets" id="ENSG00000197721"/>
<dbReference type="PharmGKB" id="PA26856"/>
<dbReference type="VEuPathDB" id="HostDB:ENSG00000197721"/>
<dbReference type="eggNOG" id="KOG4297">
    <property type="taxonomic scope" value="Eukaryota"/>
</dbReference>
<dbReference type="GeneTree" id="ENSGT00940000164130"/>
<dbReference type="InParanoid" id="Q2VPA4"/>
<dbReference type="OMA" id="QQIFCPN"/>
<dbReference type="OrthoDB" id="6127264at2759"/>
<dbReference type="PAN-GO" id="Q2VPA4">
    <property type="GO annotations" value="2 GO annotations based on evolutionary models"/>
</dbReference>
<dbReference type="PhylomeDB" id="Q2VPA4"/>
<dbReference type="TreeFam" id="TF334137"/>
<dbReference type="PathwayCommons" id="Q2VPA4"/>
<dbReference type="SignaLink" id="Q2VPA4"/>
<dbReference type="BioGRID-ORCS" id="1379">
    <property type="hits" value="58 hits in 1140 CRISPR screens"/>
</dbReference>
<dbReference type="ChiTaRS" id="CR1L">
    <property type="organism name" value="human"/>
</dbReference>
<dbReference type="GenomeRNAi" id="1379"/>
<dbReference type="Pharos" id="Q2VPA4">
    <property type="development level" value="Tdark"/>
</dbReference>
<dbReference type="PRO" id="PR:Q2VPA4"/>
<dbReference type="Proteomes" id="UP000005640">
    <property type="component" value="Chromosome 1"/>
</dbReference>
<dbReference type="RNAct" id="Q2VPA4">
    <property type="molecule type" value="protein"/>
</dbReference>
<dbReference type="Bgee" id="ENSG00000197721">
    <property type="expression patterns" value="Expressed in bone marrow and 103 other cell types or tissues"/>
</dbReference>
<dbReference type="ExpressionAtlas" id="Q2VPA4">
    <property type="expression patterns" value="baseline and differential"/>
</dbReference>
<dbReference type="GO" id="GO:0005737">
    <property type="term" value="C:cytoplasm"/>
    <property type="evidence" value="ECO:0007669"/>
    <property type="project" value="UniProtKB-SubCell"/>
</dbReference>
<dbReference type="GO" id="GO:0005615">
    <property type="term" value="C:extracellular space"/>
    <property type="evidence" value="ECO:0000318"/>
    <property type="project" value="GO_Central"/>
</dbReference>
<dbReference type="GO" id="GO:0005886">
    <property type="term" value="C:plasma membrane"/>
    <property type="evidence" value="ECO:0000318"/>
    <property type="project" value="GO_Central"/>
</dbReference>
<dbReference type="GO" id="GO:0043235">
    <property type="term" value="C:receptor complex"/>
    <property type="evidence" value="ECO:0000314"/>
    <property type="project" value="MGI"/>
</dbReference>
<dbReference type="GO" id="GO:0045959">
    <property type="term" value="P:negative regulation of complement activation, classical pathway"/>
    <property type="evidence" value="ECO:0000318"/>
    <property type="project" value="GO_Central"/>
</dbReference>
<dbReference type="GO" id="GO:0030449">
    <property type="term" value="P:regulation of complement activation"/>
    <property type="evidence" value="ECO:0000314"/>
    <property type="project" value="MGI"/>
</dbReference>
<dbReference type="GO" id="GO:1903659">
    <property type="term" value="P:regulation of complement-dependent cytotoxicity"/>
    <property type="evidence" value="ECO:0000314"/>
    <property type="project" value="MGI"/>
</dbReference>
<dbReference type="GO" id="GO:0002456">
    <property type="term" value="P:T cell mediated immunity"/>
    <property type="evidence" value="ECO:0000318"/>
    <property type="project" value="GO_Central"/>
</dbReference>
<dbReference type="CDD" id="cd00033">
    <property type="entry name" value="CCP"/>
    <property type="match status" value="8"/>
</dbReference>
<dbReference type="FunFam" id="2.10.70.10:FF:000038">
    <property type="entry name" value="Complement component receptor type 1"/>
    <property type="match status" value="2"/>
</dbReference>
<dbReference type="FunFam" id="2.10.70.10:FF:000044">
    <property type="entry name" value="Complement component receptor type 1"/>
    <property type="match status" value="1"/>
</dbReference>
<dbReference type="FunFam" id="2.10.70.10:FF:000008">
    <property type="entry name" value="Complement receptor type 1"/>
    <property type="match status" value="1"/>
</dbReference>
<dbReference type="FunFam" id="2.10.70.10:FF:000033">
    <property type="entry name" value="Complement receptor type 1"/>
    <property type="match status" value="1"/>
</dbReference>
<dbReference type="FunFam" id="2.10.70.10:FF:000014">
    <property type="entry name" value="Membrane cofactor protein"/>
    <property type="match status" value="2"/>
</dbReference>
<dbReference type="Gene3D" id="2.10.70.10">
    <property type="entry name" value="Complement Module, domain 1"/>
    <property type="match status" value="8"/>
</dbReference>
<dbReference type="InterPro" id="IPR050350">
    <property type="entry name" value="Compl-Cell_Adhes-Reg"/>
</dbReference>
<dbReference type="InterPro" id="IPR035976">
    <property type="entry name" value="Sushi/SCR/CCP_sf"/>
</dbReference>
<dbReference type="InterPro" id="IPR000436">
    <property type="entry name" value="Sushi_SCR_CCP_dom"/>
</dbReference>
<dbReference type="PANTHER" id="PTHR19325:SF534">
    <property type="entry name" value="COMPLEMENT COMPONENT RECEPTOR 1-LIKE PROTEIN"/>
    <property type="match status" value="1"/>
</dbReference>
<dbReference type="PANTHER" id="PTHR19325">
    <property type="entry name" value="COMPLEMENT COMPONENT-RELATED SUSHI DOMAIN-CONTAINING"/>
    <property type="match status" value="1"/>
</dbReference>
<dbReference type="Pfam" id="PF00084">
    <property type="entry name" value="Sushi"/>
    <property type="match status" value="8"/>
</dbReference>
<dbReference type="SMART" id="SM00032">
    <property type="entry name" value="CCP"/>
    <property type="match status" value="8"/>
</dbReference>
<dbReference type="SUPFAM" id="SSF57535">
    <property type="entry name" value="Complement control module/SCR domain"/>
    <property type="match status" value="8"/>
</dbReference>
<dbReference type="PROSITE" id="PS50923">
    <property type="entry name" value="SUSHI"/>
    <property type="match status" value="8"/>
</dbReference>
<evidence type="ECO:0000255" key="1"/>
<evidence type="ECO:0000255" key="2">
    <source>
        <dbReference type="PROSITE-ProRule" id="PRU00302"/>
    </source>
</evidence>
<evidence type="ECO:0000269" key="3">
    <source>
    </source>
</evidence>
<evidence type="ECO:0000269" key="4">
    <source>
    </source>
</evidence>
<evidence type="ECO:0000303" key="5">
    <source>
    </source>
</evidence>
<evidence type="ECO:0000303" key="6">
    <source>
    </source>
</evidence>
<evidence type="ECO:0000305" key="7"/>
<gene>
    <name type="primary">CR1L</name>
</gene>
<name>CR1L_HUMAN</name>
<accession>Q2VPA4</accession>
<accession>Q32MC9</accession>
<accession>Q8NEU7</accession>
<feature type="signal peptide" evidence="1">
    <location>
        <begin position="1"/>
        <end position="32"/>
    </location>
</feature>
<feature type="chain" id="PRO_0000317776" description="Complement component receptor 1-like protein">
    <location>
        <begin position="33"/>
        <end position="569"/>
    </location>
</feature>
<feature type="domain" description="Sushi 1" evidence="2">
    <location>
        <begin position="33"/>
        <end position="93"/>
    </location>
</feature>
<feature type="domain" description="Sushi 2" evidence="2">
    <location>
        <begin position="94"/>
        <end position="155"/>
    </location>
</feature>
<feature type="domain" description="Sushi 3" evidence="2">
    <location>
        <begin position="156"/>
        <end position="226"/>
    </location>
</feature>
<feature type="domain" description="Sushi 4" evidence="2">
    <location>
        <begin position="228"/>
        <end position="287"/>
    </location>
</feature>
<feature type="domain" description="Sushi 5" evidence="2">
    <location>
        <begin position="287"/>
        <end position="347"/>
    </location>
</feature>
<feature type="domain" description="Sushi 6" evidence="2">
    <location>
        <begin position="348"/>
        <end position="410"/>
    </location>
</feature>
<feature type="domain" description="Sushi 7" evidence="2">
    <location>
        <begin position="411"/>
        <end position="472"/>
    </location>
</feature>
<feature type="domain" description="Sushi 8" evidence="2">
    <location>
        <begin position="473"/>
        <end position="543"/>
    </location>
</feature>
<feature type="glycosylation site" description="N-linked (GlcNAc...) asparagine" evidence="1">
    <location>
        <position position="48"/>
    </location>
</feature>
<feature type="disulfide bond" evidence="2">
    <location>
        <begin position="35"/>
        <end position="78"/>
    </location>
</feature>
<feature type="disulfide bond" evidence="2">
    <location>
        <begin position="65"/>
        <end position="91"/>
    </location>
</feature>
<feature type="disulfide bond" evidence="2">
    <location>
        <begin position="96"/>
        <end position="137"/>
    </location>
</feature>
<feature type="disulfide bond" evidence="2">
    <location>
        <begin position="123"/>
        <end position="153"/>
    </location>
</feature>
<feature type="disulfide bond" evidence="2">
    <location>
        <begin position="158"/>
        <end position="207"/>
    </location>
</feature>
<feature type="disulfide bond" evidence="2">
    <location>
        <begin position="187"/>
        <end position="224"/>
    </location>
</feature>
<feature type="disulfide bond" evidence="2">
    <location>
        <begin position="230"/>
        <end position="272"/>
    </location>
</feature>
<feature type="disulfide bond" evidence="2">
    <location>
        <begin position="258"/>
        <end position="285"/>
    </location>
</feature>
<feature type="disulfide bond" evidence="2">
    <location>
        <begin position="289"/>
        <end position="332"/>
    </location>
</feature>
<feature type="disulfide bond" evidence="2">
    <location>
        <begin position="318"/>
        <end position="345"/>
    </location>
</feature>
<feature type="disulfide bond" evidence="2">
    <location>
        <begin position="350"/>
        <end position="392"/>
    </location>
</feature>
<feature type="disulfide bond" evidence="2">
    <location>
        <begin position="378"/>
        <end position="408"/>
    </location>
</feature>
<feature type="disulfide bond" evidence="2">
    <location>
        <begin position="413"/>
        <end position="454"/>
    </location>
</feature>
<feature type="disulfide bond" evidence="2">
    <location>
        <begin position="440"/>
        <end position="470"/>
    </location>
</feature>
<feature type="disulfide bond" evidence="2">
    <location>
        <begin position="504"/>
        <end position="541"/>
    </location>
</feature>
<feature type="splice variant" id="VSP_031151" description="In isoform 2." evidence="6">
    <location>
        <begin position="1"/>
        <end position="263"/>
    </location>
</feature>
<feature type="splice variant" id="VSP_031152" description="In isoform 2 and isoform 3." evidence="5 6">
    <original>H</original>
    <variation>F</variation>
    <location>
        <position position="444"/>
    </location>
</feature>
<feature type="splice variant" id="VSP_031153" description="In isoform 2 and isoform 3." evidence="5 6">
    <location>
        <begin position="445"/>
        <end position="569"/>
    </location>
</feature>
<feature type="sequence variant" id="VAR_038677" description="In dbSNP:rs2296158.">
    <original>R</original>
    <variation>G</variation>
    <location>
        <position position="116"/>
    </location>
</feature>
<feature type="sequence variant" id="VAR_038678" description="In dbSNP:rs3085.">
    <original>I</original>
    <variation>V</variation>
    <location>
        <position position="139"/>
    </location>
</feature>
<feature type="sequence variant" id="VAR_038679" description="In dbSNP:rs12729569." evidence="4">
    <original>N</original>
    <variation>D</variation>
    <location>
        <position position="402"/>
    </location>
</feature>
<feature type="sequence variant" id="VAR_038680" description="In dbSNP:rs6683902." evidence="4">
    <original>I</original>
    <variation>V</variation>
    <location>
        <position position="455"/>
    </location>
</feature>
<feature type="sequence variant" id="VAR_038681" description="In dbSNP:rs2796257.">
    <original>L</original>
    <variation>P</variation>
    <location>
        <position position="491"/>
    </location>
</feature>
<organism>
    <name type="scientific">Homo sapiens</name>
    <name type="common">Human</name>
    <dbReference type="NCBI Taxonomy" id="9606"/>
    <lineage>
        <taxon>Eukaryota</taxon>
        <taxon>Metazoa</taxon>
        <taxon>Chordata</taxon>
        <taxon>Craniata</taxon>
        <taxon>Vertebrata</taxon>
        <taxon>Euteleostomi</taxon>
        <taxon>Mammalia</taxon>
        <taxon>Eutheria</taxon>
        <taxon>Euarchontoglires</taxon>
        <taxon>Primates</taxon>
        <taxon>Haplorrhini</taxon>
        <taxon>Catarrhini</taxon>
        <taxon>Hominidae</taxon>
        <taxon>Homo</taxon>
    </lineage>
</organism>